<sequence length="943" mass="101832">MSSNTVAEFAAELKKSPETLLDQLKSAGVVKVSPSDVLNEADKQKLLAHLQASHGTAGGDRKKITLVKKSTSEIKQADASGKARTIQVEVRKKRTFIKRDDNVDAPSDAAESAPSAEDLELVRREEEARRQAELIRRQEEELALTRREREERERREREAEERAAAYAAQQAEKKAQESAERAEAQREAAVEAEERAKAQADARAKADEESKARAAEETARAADLDERRRKALAEAEAIRAMMAAPKKVLVAKKPEEPKPAAKAGASGDAKKGTLHKPATGSGTGARAAAPSAPGGAGKEVKSAKLSSSWANDTTKKKEIKTRGDSSGGVGRNNWRGGPRGRRGNDRDDQRQQQAATEFRVLEVYVPETITVAELAHKMAIKASEVIKSLMKMGQMVTINQPLDQDTAMIVVEEMGHTAKVAALDDPEAFTAEEVSSQDAEQLSRAPVVTVMGHVDHGKTSLLDYIRRSKVASGEAGGITQHIGAYHVETPRGIVTFLDTPGHEAFTAMRARGAQATDIVILVCAADDGVMPQTKEAIKHAKAAGVPIVVALTKADKPEANIERVKQELVGEQVVPEEYGGDSPFVAVSSKTGMGIDALLEQVLLQAEVLELKAPVDAAAKGIVIETQLDKGRGSVATVLVQSGTLKVGDVVLAGQTFGRVRAMLDEDGKQTKEAGPSIPVEIQGLNEVPQAGDDFMVLQDERRAREIATYRAGKFRNTKLAKQQAAKLENMFAEMGAGEVQTLPLIIKADVQGSQEALAASLLKLSTEEIRVQIVYSGVGGISESDVNLAIASKAIVIGFNVRADAQARKTAEGNDVDIRYYNIIYDAVDEVKAAMSGMLAPEQREEAIGTAEIRTVFVASKIGTVAGSYITSGQVTRNCKFRLLRDNIVIYTGDVESVRRMKDDVKEVKEGFECGIKLKNYNDIKEGDQLEFFEIKEIARTL</sequence>
<name>IF2_ACISJ</name>
<feature type="chain" id="PRO_0000335454" description="Translation initiation factor IF-2">
    <location>
        <begin position="1"/>
        <end position="943"/>
    </location>
</feature>
<feature type="domain" description="tr-type G">
    <location>
        <begin position="443"/>
        <end position="612"/>
    </location>
</feature>
<feature type="region of interest" description="Disordered" evidence="3">
    <location>
        <begin position="96"/>
        <end position="229"/>
    </location>
</feature>
<feature type="region of interest" description="Disordered" evidence="3">
    <location>
        <begin position="243"/>
        <end position="352"/>
    </location>
</feature>
<feature type="region of interest" description="G1" evidence="1">
    <location>
        <begin position="452"/>
        <end position="459"/>
    </location>
</feature>
<feature type="region of interest" description="G2" evidence="1">
    <location>
        <begin position="477"/>
        <end position="481"/>
    </location>
</feature>
<feature type="region of interest" description="G3" evidence="1">
    <location>
        <begin position="498"/>
        <end position="501"/>
    </location>
</feature>
<feature type="region of interest" description="G4" evidence="1">
    <location>
        <begin position="552"/>
        <end position="555"/>
    </location>
</feature>
<feature type="region of interest" description="G5" evidence="1">
    <location>
        <begin position="588"/>
        <end position="590"/>
    </location>
</feature>
<feature type="compositionally biased region" description="Low complexity" evidence="3">
    <location>
        <begin position="104"/>
        <end position="116"/>
    </location>
</feature>
<feature type="compositionally biased region" description="Basic and acidic residues" evidence="3">
    <location>
        <begin position="120"/>
        <end position="163"/>
    </location>
</feature>
<feature type="compositionally biased region" description="Basic and acidic residues" evidence="3">
    <location>
        <begin position="171"/>
        <end position="229"/>
    </location>
</feature>
<feature type="compositionally biased region" description="Low complexity" evidence="3">
    <location>
        <begin position="278"/>
        <end position="293"/>
    </location>
</feature>
<feature type="compositionally biased region" description="Basic and acidic residues" evidence="3">
    <location>
        <begin position="313"/>
        <end position="323"/>
    </location>
</feature>
<feature type="binding site" evidence="2">
    <location>
        <begin position="452"/>
        <end position="459"/>
    </location>
    <ligand>
        <name>GTP</name>
        <dbReference type="ChEBI" id="CHEBI:37565"/>
    </ligand>
</feature>
<feature type="binding site" evidence="2">
    <location>
        <begin position="498"/>
        <end position="502"/>
    </location>
    <ligand>
        <name>GTP</name>
        <dbReference type="ChEBI" id="CHEBI:37565"/>
    </ligand>
</feature>
<feature type="binding site" evidence="2">
    <location>
        <begin position="552"/>
        <end position="555"/>
    </location>
    <ligand>
        <name>GTP</name>
        <dbReference type="ChEBI" id="CHEBI:37565"/>
    </ligand>
</feature>
<accession>A1W8Z4</accession>
<proteinExistence type="inferred from homology"/>
<protein>
    <recommendedName>
        <fullName evidence="2">Translation initiation factor IF-2</fullName>
    </recommendedName>
</protein>
<dbReference type="EMBL" id="CP000539">
    <property type="protein sequence ID" value="ABM42719.1"/>
    <property type="molecule type" value="Genomic_DNA"/>
</dbReference>
<dbReference type="SMR" id="A1W8Z4"/>
<dbReference type="STRING" id="232721.Ajs_2561"/>
<dbReference type="KEGG" id="ajs:Ajs_2561"/>
<dbReference type="eggNOG" id="COG0532">
    <property type="taxonomic scope" value="Bacteria"/>
</dbReference>
<dbReference type="HOGENOM" id="CLU_006301_6_0_4"/>
<dbReference type="Proteomes" id="UP000000645">
    <property type="component" value="Chromosome"/>
</dbReference>
<dbReference type="GO" id="GO:0005829">
    <property type="term" value="C:cytosol"/>
    <property type="evidence" value="ECO:0007669"/>
    <property type="project" value="TreeGrafter"/>
</dbReference>
<dbReference type="GO" id="GO:0005525">
    <property type="term" value="F:GTP binding"/>
    <property type="evidence" value="ECO:0007669"/>
    <property type="project" value="UniProtKB-KW"/>
</dbReference>
<dbReference type="GO" id="GO:0003924">
    <property type="term" value="F:GTPase activity"/>
    <property type="evidence" value="ECO:0007669"/>
    <property type="project" value="UniProtKB-UniRule"/>
</dbReference>
<dbReference type="GO" id="GO:0003743">
    <property type="term" value="F:translation initiation factor activity"/>
    <property type="evidence" value="ECO:0007669"/>
    <property type="project" value="UniProtKB-UniRule"/>
</dbReference>
<dbReference type="CDD" id="cd01887">
    <property type="entry name" value="IF2_eIF5B"/>
    <property type="match status" value="1"/>
</dbReference>
<dbReference type="CDD" id="cd03702">
    <property type="entry name" value="IF2_mtIF2_II"/>
    <property type="match status" value="1"/>
</dbReference>
<dbReference type="CDD" id="cd03692">
    <property type="entry name" value="mtIF2_IVc"/>
    <property type="match status" value="1"/>
</dbReference>
<dbReference type="FunFam" id="2.40.30.10:FF:000007">
    <property type="entry name" value="Translation initiation factor IF-2"/>
    <property type="match status" value="1"/>
</dbReference>
<dbReference type="FunFam" id="2.40.30.10:FF:000008">
    <property type="entry name" value="Translation initiation factor IF-2"/>
    <property type="match status" value="1"/>
</dbReference>
<dbReference type="FunFam" id="3.40.50.10050:FF:000001">
    <property type="entry name" value="Translation initiation factor IF-2"/>
    <property type="match status" value="1"/>
</dbReference>
<dbReference type="FunFam" id="3.40.50.300:FF:000019">
    <property type="entry name" value="Translation initiation factor IF-2"/>
    <property type="match status" value="1"/>
</dbReference>
<dbReference type="Gene3D" id="3.40.50.300">
    <property type="entry name" value="P-loop containing nucleotide triphosphate hydrolases"/>
    <property type="match status" value="1"/>
</dbReference>
<dbReference type="Gene3D" id="3.30.56.50">
    <property type="entry name" value="Putative DNA-binding domain, N-terminal subdomain of bacterial translation initiation factor IF2"/>
    <property type="match status" value="1"/>
</dbReference>
<dbReference type="Gene3D" id="2.40.30.10">
    <property type="entry name" value="Translation factors"/>
    <property type="match status" value="2"/>
</dbReference>
<dbReference type="Gene3D" id="3.40.50.10050">
    <property type="entry name" value="Translation initiation factor IF- 2, domain 3"/>
    <property type="match status" value="1"/>
</dbReference>
<dbReference type="HAMAP" id="MF_00100_B">
    <property type="entry name" value="IF_2_B"/>
    <property type="match status" value="1"/>
</dbReference>
<dbReference type="InterPro" id="IPR009061">
    <property type="entry name" value="DNA-bd_dom_put_sf"/>
</dbReference>
<dbReference type="InterPro" id="IPR053905">
    <property type="entry name" value="EF-G-like_DII"/>
</dbReference>
<dbReference type="InterPro" id="IPR013575">
    <property type="entry name" value="IF2_assoc_dom_bac"/>
</dbReference>
<dbReference type="InterPro" id="IPR044145">
    <property type="entry name" value="IF2_II"/>
</dbReference>
<dbReference type="InterPro" id="IPR006847">
    <property type="entry name" value="IF2_N"/>
</dbReference>
<dbReference type="InterPro" id="IPR027417">
    <property type="entry name" value="P-loop_NTPase"/>
</dbReference>
<dbReference type="InterPro" id="IPR005225">
    <property type="entry name" value="Small_GTP-bd"/>
</dbReference>
<dbReference type="InterPro" id="IPR000795">
    <property type="entry name" value="T_Tr_GTP-bd_dom"/>
</dbReference>
<dbReference type="InterPro" id="IPR000178">
    <property type="entry name" value="TF_IF2_bacterial-like"/>
</dbReference>
<dbReference type="InterPro" id="IPR015760">
    <property type="entry name" value="TIF_IF2"/>
</dbReference>
<dbReference type="InterPro" id="IPR023115">
    <property type="entry name" value="TIF_IF2_dom3"/>
</dbReference>
<dbReference type="InterPro" id="IPR036925">
    <property type="entry name" value="TIF_IF2_dom3_sf"/>
</dbReference>
<dbReference type="InterPro" id="IPR009000">
    <property type="entry name" value="Transl_B-barrel_sf"/>
</dbReference>
<dbReference type="NCBIfam" id="TIGR00487">
    <property type="entry name" value="IF-2"/>
    <property type="match status" value="1"/>
</dbReference>
<dbReference type="NCBIfam" id="TIGR00231">
    <property type="entry name" value="small_GTP"/>
    <property type="match status" value="1"/>
</dbReference>
<dbReference type="PANTHER" id="PTHR43381:SF5">
    <property type="entry name" value="TR-TYPE G DOMAIN-CONTAINING PROTEIN"/>
    <property type="match status" value="1"/>
</dbReference>
<dbReference type="PANTHER" id="PTHR43381">
    <property type="entry name" value="TRANSLATION INITIATION FACTOR IF-2-RELATED"/>
    <property type="match status" value="1"/>
</dbReference>
<dbReference type="Pfam" id="PF22042">
    <property type="entry name" value="EF-G_D2"/>
    <property type="match status" value="1"/>
</dbReference>
<dbReference type="Pfam" id="PF00009">
    <property type="entry name" value="GTP_EFTU"/>
    <property type="match status" value="1"/>
</dbReference>
<dbReference type="Pfam" id="PF11987">
    <property type="entry name" value="IF-2"/>
    <property type="match status" value="1"/>
</dbReference>
<dbReference type="Pfam" id="PF08364">
    <property type="entry name" value="IF2_assoc"/>
    <property type="match status" value="1"/>
</dbReference>
<dbReference type="Pfam" id="PF04760">
    <property type="entry name" value="IF2_N"/>
    <property type="match status" value="2"/>
</dbReference>
<dbReference type="SUPFAM" id="SSF52156">
    <property type="entry name" value="Initiation factor IF2/eIF5b, domain 3"/>
    <property type="match status" value="1"/>
</dbReference>
<dbReference type="SUPFAM" id="SSF52540">
    <property type="entry name" value="P-loop containing nucleoside triphosphate hydrolases"/>
    <property type="match status" value="1"/>
</dbReference>
<dbReference type="SUPFAM" id="SSF46955">
    <property type="entry name" value="Putative DNA-binding domain"/>
    <property type="match status" value="1"/>
</dbReference>
<dbReference type="SUPFAM" id="SSF50447">
    <property type="entry name" value="Translation proteins"/>
    <property type="match status" value="2"/>
</dbReference>
<dbReference type="PROSITE" id="PS51722">
    <property type="entry name" value="G_TR_2"/>
    <property type="match status" value="1"/>
</dbReference>
<gene>
    <name evidence="2" type="primary">infB</name>
    <name type="ordered locus">Ajs_2561</name>
</gene>
<comment type="function">
    <text evidence="2">One of the essential components for the initiation of protein synthesis. Protects formylmethionyl-tRNA from spontaneous hydrolysis and promotes its binding to the 30S ribosomal subunits. Also involved in the hydrolysis of GTP during the formation of the 70S ribosomal complex.</text>
</comment>
<comment type="subcellular location">
    <subcellularLocation>
        <location evidence="2">Cytoplasm</location>
    </subcellularLocation>
</comment>
<comment type="similarity">
    <text evidence="2">Belongs to the TRAFAC class translation factor GTPase superfamily. Classic translation factor GTPase family. IF-2 subfamily.</text>
</comment>
<reference key="1">
    <citation type="submission" date="2006-12" db="EMBL/GenBank/DDBJ databases">
        <title>Complete sequence of chromosome 1 of Acidovorax sp. JS42.</title>
        <authorList>
            <person name="Copeland A."/>
            <person name="Lucas S."/>
            <person name="Lapidus A."/>
            <person name="Barry K."/>
            <person name="Detter J.C."/>
            <person name="Glavina del Rio T."/>
            <person name="Dalin E."/>
            <person name="Tice H."/>
            <person name="Pitluck S."/>
            <person name="Chertkov O."/>
            <person name="Brettin T."/>
            <person name="Bruce D."/>
            <person name="Han C."/>
            <person name="Tapia R."/>
            <person name="Gilna P."/>
            <person name="Schmutz J."/>
            <person name="Larimer F."/>
            <person name="Land M."/>
            <person name="Hauser L."/>
            <person name="Kyrpides N."/>
            <person name="Kim E."/>
            <person name="Stahl D."/>
            <person name="Richardson P."/>
        </authorList>
    </citation>
    <scope>NUCLEOTIDE SEQUENCE [LARGE SCALE GENOMIC DNA]</scope>
    <source>
        <strain>JS42</strain>
    </source>
</reference>
<organism>
    <name type="scientific">Acidovorax sp. (strain JS42)</name>
    <dbReference type="NCBI Taxonomy" id="232721"/>
    <lineage>
        <taxon>Bacteria</taxon>
        <taxon>Pseudomonadati</taxon>
        <taxon>Pseudomonadota</taxon>
        <taxon>Betaproteobacteria</taxon>
        <taxon>Burkholderiales</taxon>
        <taxon>Comamonadaceae</taxon>
        <taxon>Acidovorax</taxon>
    </lineage>
</organism>
<keyword id="KW-0963">Cytoplasm</keyword>
<keyword id="KW-0342">GTP-binding</keyword>
<keyword id="KW-0396">Initiation factor</keyword>
<keyword id="KW-0547">Nucleotide-binding</keyword>
<keyword id="KW-0648">Protein biosynthesis</keyword>
<evidence type="ECO:0000250" key="1"/>
<evidence type="ECO:0000255" key="2">
    <source>
        <dbReference type="HAMAP-Rule" id="MF_00100"/>
    </source>
</evidence>
<evidence type="ECO:0000256" key="3">
    <source>
        <dbReference type="SAM" id="MobiDB-lite"/>
    </source>
</evidence>